<protein>
    <recommendedName>
        <fullName evidence="1">UPF0250 protein XCC3453</fullName>
    </recommendedName>
</protein>
<name>Y3453_XANCP</name>
<gene>
    <name type="ordered locus">XCC3453</name>
</gene>
<evidence type="ECO:0000255" key="1">
    <source>
        <dbReference type="HAMAP-Rule" id="MF_00659"/>
    </source>
</evidence>
<organism>
    <name type="scientific">Xanthomonas campestris pv. campestris (strain ATCC 33913 / DSM 3586 / NCPPB 528 / LMG 568 / P 25)</name>
    <dbReference type="NCBI Taxonomy" id="190485"/>
    <lineage>
        <taxon>Bacteria</taxon>
        <taxon>Pseudomonadati</taxon>
        <taxon>Pseudomonadota</taxon>
        <taxon>Gammaproteobacteria</taxon>
        <taxon>Lysobacterales</taxon>
        <taxon>Lysobacteraceae</taxon>
        <taxon>Xanthomonas</taxon>
    </lineage>
</organism>
<dbReference type="EMBL" id="AE008922">
    <property type="protein sequence ID" value="AAM42723.1"/>
    <property type="molecule type" value="Genomic_DNA"/>
</dbReference>
<dbReference type="RefSeq" id="NP_638799.1">
    <property type="nucleotide sequence ID" value="NC_003902.1"/>
</dbReference>
<dbReference type="RefSeq" id="WP_011038551.1">
    <property type="nucleotide sequence ID" value="NC_003902.1"/>
</dbReference>
<dbReference type="SMR" id="Q8P588"/>
<dbReference type="STRING" id="190485.XCC3453"/>
<dbReference type="EnsemblBacteria" id="AAM42723">
    <property type="protein sequence ID" value="AAM42723"/>
    <property type="gene ID" value="XCC3453"/>
</dbReference>
<dbReference type="KEGG" id="xcc:XCC3453"/>
<dbReference type="PATRIC" id="fig|190485.4.peg.3692"/>
<dbReference type="eggNOG" id="COG2921">
    <property type="taxonomic scope" value="Bacteria"/>
</dbReference>
<dbReference type="HOGENOM" id="CLU_161438_1_1_6"/>
<dbReference type="OrthoDB" id="9793424at2"/>
<dbReference type="Proteomes" id="UP000001010">
    <property type="component" value="Chromosome"/>
</dbReference>
<dbReference type="Gene3D" id="3.30.70.260">
    <property type="match status" value="1"/>
</dbReference>
<dbReference type="HAMAP" id="MF_00659">
    <property type="entry name" value="UPF0250"/>
    <property type="match status" value="1"/>
</dbReference>
<dbReference type="InterPro" id="IPR007454">
    <property type="entry name" value="UPF0250_YbeD-like"/>
</dbReference>
<dbReference type="InterPro" id="IPR027471">
    <property type="entry name" value="YbeD-like_sf"/>
</dbReference>
<dbReference type="NCBIfam" id="NF002066">
    <property type="entry name" value="PRK00907.1"/>
    <property type="match status" value="1"/>
</dbReference>
<dbReference type="Pfam" id="PF04359">
    <property type="entry name" value="DUF493"/>
    <property type="match status" value="1"/>
</dbReference>
<dbReference type="SUPFAM" id="SSF117991">
    <property type="entry name" value="YbeD/HP0495-like"/>
    <property type="match status" value="1"/>
</dbReference>
<keyword id="KW-1185">Reference proteome</keyword>
<sequence length="92" mass="10318">MEISSDNPDHGFQFPGTFELSAMGTAERGLETELPRLLAATGVELLEESISWKHSSSGKYVSVRIGFRADTREQFDSAHQALREHPEVKWTL</sequence>
<reference key="1">
    <citation type="journal article" date="2002" name="Nature">
        <title>Comparison of the genomes of two Xanthomonas pathogens with differing host specificities.</title>
        <authorList>
            <person name="da Silva A.C.R."/>
            <person name="Ferro J.A."/>
            <person name="Reinach F.C."/>
            <person name="Farah C.S."/>
            <person name="Furlan L.R."/>
            <person name="Quaggio R.B."/>
            <person name="Monteiro-Vitorello C.B."/>
            <person name="Van Sluys M.A."/>
            <person name="Almeida N.F. Jr."/>
            <person name="Alves L.M.C."/>
            <person name="do Amaral A.M."/>
            <person name="Bertolini M.C."/>
            <person name="Camargo L.E.A."/>
            <person name="Camarotte G."/>
            <person name="Cannavan F."/>
            <person name="Cardozo J."/>
            <person name="Chambergo F."/>
            <person name="Ciapina L.P."/>
            <person name="Cicarelli R.M.B."/>
            <person name="Coutinho L.L."/>
            <person name="Cursino-Santos J.R."/>
            <person name="El-Dorry H."/>
            <person name="Faria J.B."/>
            <person name="Ferreira A.J.S."/>
            <person name="Ferreira R.C.C."/>
            <person name="Ferro M.I.T."/>
            <person name="Formighieri E.F."/>
            <person name="Franco M.C."/>
            <person name="Greggio C.C."/>
            <person name="Gruber A."/>
            <person name="Katsuyama A.M."/>
            <person name="Kishi L.T."/>
            <person name="Leite R.P."/>
            <person name="Lemos E.G.M."/>
            <person name="Lemos M.V.F."/>
            <person name="Locali E.C."/>
            <person name="Machado M.A."/>
            <person name="Madeira A.M.B.N."/>
            <person name="Martinez-Rossi N.M."/>
            <person name="Martins E.C."/>
            <person name="Meidanis J."/>
            <person name="Menck C.F.M."/>
            <person name="Miyaki C.Y."/>
            <person name="Moon D.H."/>
            <person name="Moreira L.M."/>
            <person name="Novo M.T.M."/>
            <person name="Okura V.K."/>
            <person name="Oliveira M.C."/>
            <person name="Oliveira V.R."/>
            <person name="Pereira H.A."/>
            <person name="Rossi A."/>
            <person name="Sena J.A.D."/>
            <person name="Silva C."/>
            <person name="de Souza R.F."/>
            <person name="Spinola L.A.F."/>
            <person name="Takita M.A."/>
            <person name="Tamura R.E."/>
            <person name="Teixeira E.C."/>
            <person name="Tezza R.I.D."/>
            <person name="Trindade dos Santos M."/>
            <person name="Truffi D."/>
            <person name="Tsai S.M."/>
            <person name="White F.F."/>
            <person name="Setubal J.C."/>
            <person name="Kitajima J.P."/>
        </authorList>
    </citation>
    <scope>NUCLEOTIDE SEQUENCE [LARGE SCALE GENOMIC DNA]</scope>
    <source>
        <strain>ATCC 33913 / DSM 3586 / NCPPB 528 / LMG 568 / P 25</strain>
    </source>
</reference>
<accession>Q8P588</accession>
<comment type="similarity">
    <text evidence="1">Belongs to the UPF0250 family.</text>
</comment>
<feature type="chain" id="PRO_0000209319" description="UPF0250 protein XCC3453">
    <location>
        <begin position="1"/>
        <end position="92"/>
    </location>
</feature>
<proteinExistence type="inferred from homology"/>